<keyword id="KW-0010">Activator</keyword>
<keyword id="KW-0539">Nucleus</keyword>
<keyword id="KW-1185">Reference proteome</keyword>
<keyword id="KW-0804">Transcription</keyword>
<keyword id="KW-0805">Transcription regulation</keyword>
<evidence type="ECO:0000250" key="1"/>
<evidence type="ECO:0000305" key="2"/>
<comment type="function">
    <text evidence="1">Component of the Mediator complex, a coactivator involved in the regulated transcription of nearly all RNA polymerase II-dependent genes. Mediator functions as a bridge to convey information from gene-specific regulatory proteins to the basal RNA polymerase II transcription machinery. Mediator is recruited to promoters by direct interactions with regulatory proteins and serves as a scaffold for the assembly of a functional preinitiation complex with RNA polymerase II and the general transcription factors (By similarity).</text>
</comment>
<comment type="subunit">
    <text evidence="1">Component of the Mediator complex.</text>
</comment>
<comment type="subcellular location">
    <subcellularLocation>
        <location evidence="2">Nucleus</location>
    </subcellularLocation>
</comment>
<comment type="similarity">
    <text evidence="2">Belongs to the Mediator complex subunit 22 family.</text>
</comment>
<accession>Q23679</accession>
<proteinExistence type="inferred from homology"/>
<sequence length="157" mass="18163">MSGVAGGASKKSSSRTMATKKLIIDEFKRRLRDNIKSLNDNFFHIIQAAKVNPDDNAYKNQTGKMTEFYTTKNEMAVRAQLMVRASDELLKLTADLKEFLILHDFHFLTHNIKQAEAQCEETLRQQSHQHNCLDSEVSNILFDLEREIAENFYLRHT</sequence>
<protein>
    <recommendedName>
        <fullName>Mediator of RNA polymerase II transcription subunit 22</fullName>
    </recommendedName>
    <alternativeName>
        <fullName>Mediator complex subunit 22</fullName>
    </alternativeName>
</protein>
<name>MED22_CAEEL</name>
<feature type="chain" id="PRO_0000178841" description="Mediator of RNA polymerase II transcription subunit 22">
    <location>
        <begin position="1"/>
        <end position="157"/>
    </location>
</feature>
<dbReference type="EMBL" id="BX284602">
    <property type="protein sequence ID" value="CAA88887.1"/>
    <property type="molecule type" value="Genomic_DNA"/>
</dbReference>
<dbReference type="PIR" id="T28127">
    <property type="entry name" value="T28127"/>
</dbReference>
<dbReference type="RefSeq" id="NP_496216.1">
    <property type="nucleotide sequence ID" value="NM_063815.6"/>
</dbReference>
<dbReference type="SMR" id="Q23679"/>
<dbReference type="BioGRID" id="39914">
    <property type="interactions" value="3"/>
</dbReference>
<dbReference type="DIP" id="DIP-26478N"/>
<dbReference type="FunCoup" id="Q23679">
    <property type="interactions" value="2373"/>
</dbReference>
<dbReference type="IntAct" id="Q23679">
    <property type="interactions" value="3"/>
</dbReference>
<dbReference type="STRING" id="6239.ZK970.3.1"/>
<dbReference type="PaxDb" id="6239-ZK970.3"/>
<dbReference type="PeptideAtlas" id="Q23679"/>
<dbReference type="EnsemblMetazoa" id="ZK970.3.1">
    <property type="protein sequence ID" value="ZK970.3.1"/>
    <property type="gene ID" value="WBGene00007022"/>
</dbReference>
<dbReference type="GeneID" id="174595"/>
<dbReference type="KEGG" id="cel:CELE_ZK970.3"/>
<dbReference type="UCSC" id="ZK970.3">
    <property type="organism name" value="c. elegans"/>
</dbReference>
<dbReference type="AGR" id="WB:WBGene00007022"/>
<dbReference type="CTD" id="174595"/>
<dbReference type="WormBase" id="ZK970.3">
    <property type="protein sequence ID" value="CE02403"/>
    <property type="gene ID" value="WBGene00007022"/>
    <property type="gene designation" value="mdt-22"/>
</dbReference>
<dbReference type="eggNOG" id="KOG3304">
    <property type="taxonomic scope" value="Eukaryota"/>
</dbReference>
<dbReference type="GeneTree" id="ENSGT00390000004339"/>
<dbReference type="HOGENOM" id="CLU_117242_2_0_1"/>
<dbReference type="InParanoid" id="Q23679"/>
<dbReference type="OMA" id="ILRYDAM"/>
<dbReference type="OrthoDB" id="203279at2759"/>
<dbReference type="PhylomeDB" id="Q23679"/>
<dbReference type="PRO" id="PR:Q23679"/>
<dbReference type="Proteomes" id="UP000001940">
    <property type="component" value="Chromosome II"/>
</dbReference>
<dbReference type="Bgee" id="WBGene00007022">
    <property type="expression patterns" value="Expressed in germ line (C elegans) and 4 other cell types or tissues"/>
</dbReference>
<dbReference type="GO" id="GO:0016592">
    <property type="term" value="C:mediator complex"/>
    <property type="evidence" value="ECO:0000318"/>
    <property type="project" value="GO_Central"/>
</dbReference>
<dbReference type="GO" id="GO:0003712">
    <property type="term" value="F:transcription coregulator activity"/>
    <property type="evidence" value="ECO:0007669"/>
    <property type="project" value="InterPro"/>
</dbReference>
<dbReference type="GO" id="GO:0006357">
    <property type="term" value="P:regulation of transcription by RNA polymerase II"/>
    <property type="evidence" value="ECO:0007669"/>
    <property type="project" value="InterPro"/>
</dbReference>
<dbReference type="InterPro" id="IPR009332">
    <property type="entry name" value="Med22"/>
</dbReference>
<dbReference type="PANTHER" id="PTHR12434">
    <property type="entry name" value="MEDIATOR OF RNA POLYMERASE II TRANSCRIPTION SUBUNIT 22"/>
    <property type="match status" value="1"/>
</dbReference>
<dbReference type="PANTHER" id="PTHR12434:SF6">
    <property type="entry name" value="MEDIATOR OF RNA POLYMERASE II TRANSCRIPTION SUBUNIT 22"/>
    <property type="match status" value="1"/>
</dbReference>
<dbReference type="Pfam" id="PF06179">
    <property type="entry name" value="Med22"/>
    <property type="match status" value="1"/>
</dbReference>
<gene>
    <name type="primary">mdt-22</name>
    <name type="ORF">ZK970.3</name>
</gene>
<reference key="1">
    <citation type="journal article" date="1998" name="Science">
        <title>Genome sequence of the nematode C. elegans: a platform for investigating biology.</title>
        <authorList>
            <consortium name="The C. elegans sequencing consortium"/>
        </authorList>
    </citation>
    <scope>NUCLEOTIDE SEQUENCE [LARGE SCALE GENOMIC DNA]</scope>
    <source>
        <strain>Bristol N2</strain>
    </source>
</reference>
<reference key="2">
    <citation type="journal article" date="2004" name="Mol. Cell">
        <title>A unified nomenclature for protein subunits of mediator complexes linking transcriptional regulators to RNA polymerase II.</title>
        <authorList>
            <person name="Bourbon H.-M."/>
            <person name="Aguilera A."/>
            <person name="Ansari A.Z."/>
            <person name="Asturias F.J."/>
            <person name="Berk A.J."/>
            <person name="Bjoerklund S."/>
            <person name="Blackwell T.K."/>
            <person name="Borggrefe T."/>
            <person name="Carey M."/>
            <person name="Carlson M."/>
            <person name="Conaway J.W."/>
            <person name="Conaway R.C."/>
            <person name="Emmons S.W."/>
            <person name="Fondell J.D."/>
            <person name="Freedman L.P."/>
            <person name="Fukasawa T."/>
            <person name="Gustafsson C.M."/>
            <person name="Han M."/>
            <person name="He X."/>
            <person name="Herman P.K."/>
            <person name="Hinnebusch A.G."/>
            <person name="Holmberg S."/>
            <person name="Holstege F.C.P."/>
            <person name="Jaehning J.A."/>
            <person name="Kim Y.-J."/>
            <person name="Kuras L."/>
            <person name="Leutz A."/>
            <person name="Lis J.T."/>
            <person name="Meisterernest M."/>
            <person name="Naeaer A.M."/>
            <person name="Nasmyth K."/>
            <person name="Parvin J.D."/>
            <person name="Ptashne M."/>
            <person name="Reinberg D."/>
            <person name="Ronne H."/>
            <person name="Sadowski I."/>
            <person name="Sakurai H."/>
            <person name="Sipiczki M."/>
            <person name="Sternberg P.W."/>
            <person name="Stillman D.J."/>
            <person name="Strich R."/>
            <person name="Struhl K."/>
            <person name="Svejstrup J.Q."/>
            <person name="Tuck S."/>
            <person name="Winston F."/>
            <person name="Roeder R.G."/>
            <person name="Kornberg R.D."/>
        </authorList>
    </citation>
    <scope>IDENTIFICATION</scope>
</reference>
<organism>
    <name type="scientific">Caenorhabditis elegans</name>
    <dbReference type="NCBI Taxonomy" id="6239"/>
    <lineage>
        <taxon>Eukaryota</taxon>
        <taxon>Metazoa</taxon>
        <taxon>Ecdysozoa</taxon>
        <taxon>Nematoda</taxon>
        <taxon>Chromadorea</taxon>
        <taxon>Rhabditida</taxon>
        <taxon>Rhabditina</taxon>
        <taxon>Rhabditomorpha</taxon>
        <taxon>Rhabditoidea</taxon>
        <taxon>Rhabditidae</taxon>
        <taxon>Peloderinae</taxon>
        <taxon>Caenorhabditis</taxon>
    </lineage>
</organism>